<protein>
    <recommendedName>
        <fullName>Serine carboxypeptidase-like 46</fullName>
        <ecNumber>3.4.16.-</ecNumber>
    </recommendedName>
</protein>
<gene>
    <name type="primary">SCPL46</name>
    <name type="ordered locus">At2g33530</name>
    <name type="ORF">F4P9.30</name>
</gene>
<reference key="1">
    <citation type="journal article" date="1999" name="Nature">
        <title>Sequence and analysis of chromosome 2 of the plant Arabidopsis thaliana.</title>
        <authorList>
            <person name="Lin X."/>
            <person name="Kaul S."/>
            <person name="Rounsley S.D."/>
            <person name="Shea T.P."/>
            <person name="Benito M.-I."/>
            <person name="Town C.D."/>
            <person name="Fujii C.Y."/>
            <person name="Mason T.M."/>
            <person name="Bowman C.L."/>
            <person name="Barnstead M.E."/>
            <person name="Feldblyum T.V."/>
            <person name="Buell C.R."/>
            <person name="Ketchum K.A."/>
            <person name="Lee J.J."/>
            <person name="Ronning C.M."/>
            <person name="Koo H.L."/>
            <person name="Moffat K.S."/>
            <person name="Cronin L.A."/>
            <person name="Shen M."/>
            <person name="Pai G."/>
            <person name="Van Aken S."/>
            <person name="Umayam L."/>
            <person name="Tallon L.J."/>
            <person name="Gill J.E."/>
            <person name="Adams M.D."/>
            <person name="Carrera A.J."/>
            <person name="Creasy T.H."/>
            <person name="Goodman H.M."/>
            <person name="Somerville C.R."/>
            <person name="Copenhaver G.P."/>
            <person name="Preuss D."/>
            <person name="Nierman W.C."/>
            <person name="White O."/>
            <person name="Eisen J.A."/>
            <person name="Salzberg S.L."/>
            <person name="Fraser C.M."/>
            <person name="Venter J.C."/>
        </authorList>
    </citation>
    <scope>NUCLEOTIDE SEQUENCE [LARGE SCALE GENOMIC DNA]</scope>
    <source>
        <strain>cv. Columbia</strain>
    </source>
</reference>
<reference key="2">
    <citation type="journal article" date="2017" name="Plant J.">
        <title>Araport11: a complete reannotation of the Arabidopsis thaliana reference genome.</title>
        <authorList>
            <person name="Cheng C.Y."/>
            <person name="Krishnakumar V."/>
            <person name="Chan A.P."/>
            <person name="Thibaud-Nissen F."/>
            <person name="Schobel S."/>
            <person name="Town C.D."/>
        </authorList>
    </citation>
    <scope>GENOME REANNOTATION</scope>
    <source>
        <strain>cv. Columbia</strain>
    </source>
</reference>
<reference key="3">
    <citation type="journal article" date="2003" name="Science">
        <title>Empirical analysis of transcriptional activity in the Arabidopsis genome.</title>
        <authorList>
            <person name="Yamada K."/>
            <person name="Lim J."/>
            <person name="Dale J.M."/>
            <person name="Chen H."/>
            <person name="Shinn P."/>
            <person name="Palm C.J."/>
            <person name="Southwick A.M."/>
            <person name="Wu H.C."/>
            <person name="Kim C.J."/>
            <person name="Nguyen M."/>
            <person name="Pham P.K."/>
            <person name="Cheuk R.F."/>
            <person name="Karlin-Newmann G."/>
            <person name="Liu S.X."/>
            <person name="Lam B."/>
            <person name="Sakano H."/>
            <person name="Wu T."/>
            <person name="Yu G."/>
            <person name="Miranda M."/>
            <person name="Quach H.L."/>
            <person name="Tripp M."/>
            <person name="Chang C.H."/>
            <person name="Lee J.M."/>
            <person name="Toriumi M.J."/>
            <person name="Chan M.M."/>
            <person name="Tang C.C."/>
            <person name="Onodera C.S."/>
            <person name="Deng J.M."/>
            <person name="Akiyama K."/>
            <person name="Ansari Y."/>
            <person name="Arakawa T."/>
            <person name="Banh J."/>
            <person name="Banno F."/>
            <person name="Bowser L."/>
            <person name="Brooks S.Y."/>
            <person name="Carninci P."/>
            <person name="Chao Q."/>
            <person name="Choy N."/>
            <person name="Enju A."/>
            <person name="Goldsmith A.D."/>
            <person name="Gurjal M."/>
            <person name="Hansen N.F."/>
            <person name="Hayashizaki Y."/>
            <person name="Johnson-Hopson C."/>
            <person name="Hsuan V.W."/>
            <person name="Iida K."/>
            <person name="Karnes M."/>
            <person name="Khan S."/>
            <person name="Koesema E."/>
            <person name="Ishida J."/>
            <person name="Jiang P.X."/>
            <person name="Jones T."/>
            <person name="Kawai J."/>
            <person name="Kamiya A."/>
            <person name="Meyers C."/>
            <person name="Nakajima M."/>
            <person name="Narusaka M."/>
            <person name="Seki M."/>
            <person name="Sakurai T."/>
            <person name="Satou M."/>
            <person name="Tamse R."/>
            <person name="Vaysberg M."/>
            <person name="Wallender E.K."/>
            <person name="Wong C."/>
            <person name="Yamamura Y."/>
            <person name="Yuan S."/>
            <person name="Shinozaki K."/>
            <person name="Davis R.W."/>
            <person name="Theologis A."/>
            <person name="Ecker J.R."/>
        </authorList>
    </citation>
    <scope>NUCLEOTIDE SEQUENCE [LARGE SCALE MRNA]</scope>
    <source>
        <strain>cv. Columbia</strain>
    </source>
</reference>
<reference key="4">
    <citation type="journal article" date="2005" name="Plant Physiol.">
        <title>An expression and bioinformatics analysis of the Arabidopsis serine carboxypeptidase-like gene family.</title>
        <authorList>
            <person name="Fraser C.M."/>
            <person name="Rider L.W."/>
            <person name="Chapple C."/>
        </authorList>
    </citation>
    <scope>GENE FAMILY</scope>
    <scope>TISSUE SPECIFICITY</scope>
    <scope>NOMENCLATURE</scope>
</reference>
<accession>Q8VY01</accession>
<accession>O22803</accession>
<organism>
    <name type="scientific">Arabidopsis thaliana</name>
    <name type="common">Mouse-ear cress</name>
    <dbReference type="NCBI Taxonomy" id="3702"/>
    <lineage>
        <taxon>Eukaryota</taxon>
        <taxon>Viridiplantae</taxon>
        <taxon>Streptophyta</taxon>
        <taxon>Embryophyta</taxon>
        <taxon>Tracheophyta</taxon>
        <taxon>Spermatophyta</taxon>
        <taxon>Magnoliopsida</taxon>
        <taxon>eudicotyledons</taxon>
        <taxon>Gunneridae</taxon>
        <taxon>Pentapetalae</taxon>
        <taxon>rosids</taxon>
        <taxon>malvids</taxon>
        <taxon>Brassicales</taxon>
        <taxon>Brassicaceae</taxon>
        <taxon>Camelineae</taxon>
        <taxon>Arabidopsis</taxon>
    </lineage>
</organism>
<keyword id="KW-0121">Carboxypeptidase</keyword>
<keyword id="KW-1015">Disulfide bond</keyword>
<keyword id="KW-0325">Glycoprotein</keyword>
<keyword id="KW-0378">Hydrolase</keyword>
<keyword id="KW-0645">Protease</keyword>
<keyword id="KW-1185">Reference proteome</keyword>
<keyword id="KW-0964">Secreted</keyword>
<keyword id="KW-0732">Signal</keyword>
<sequence length="465" mass="51883">MPRLQCLTMATSLILLLQALSLVSSTILSRADRITRLPGQPRVGFQQYSGYVTIDEKKQRALFYYLAEAETKPISKPLVLWLNGGPGCSSLGVGAFSENGPFRPKGSILVRNQHSWNQEANMLYLETPVGVGFSYANESSSYEGVNDKITAKDNLVFLQKWFLKFPQYLNRSLFITGESYAGHYVPQLAQLMIQYNKKHNLFNLKGIAIGNPVMEFATDFNSRAEYFWSHGLISDPTYKLFTSSCNYSRFLSEYHRGSVSSMCTKVLSQVGIETSRFIDKYDVTLDVCIPSVLSQSKVVSPQPQQVGETVDVCLEDETVNYLNRRDVQKALHARLVGTRKWTVCSDVLDYEVLDVEVPTINIVGSLVKAGVPVFVYSGDQDSVIPLTGSRTLVKRLAEELGLRTTVPYRVWFAGQQVGGWTQVYGNTLAFATVRGAAHEVPFSQPARALVLFKAFLGGRPLPEEF</sequence>
<evidence type="ECO:0000250" key="1"/>
<evidence type="ECO:0000255" key="2"/>
<evidence type="ECO:0000255" key="3">
    <source>
        <dbReference type="PROSITE-ProRule" id="PRU10074"/>
    </source>
</evidence>
<evidence type="ECO:0000269" key="4">
    <source>
    </source>
</evidence>
<evidence type="ECO:0000305" key="5"/>
<proteinExistence type="evidence at transcript level"/>
<comment type="function">
    <text evidence="1">Probable carboxypeptidase.</text>
</comment>
<comment type="subcellular location">
    <subcellularLocation>
        <location evidence="5">Secreted</location>
    </subcellularLocation>
</comment>
<comment type="tissue specificity">
    <text evidence="4">Ubiquitous.</text>
</comment>
<comment type="similarity">
    <text evidence="5">Belongs to the peptidase S10 family.</text>
</comment>
<comment type="sequence caution" evidence="5">
    <conflict type="erroneous gene model prediction">
        <sequence resource="EMBL-CDS" id="AAB80670"/>
    </conflict>
</comment>
<dbReference type="EC" id="3.4.16.-"/>
<dbReference type="EMBL" id="AC002332">
    <property type="protein sequence ID" value="AAB80670.1"/>
    <property type="status" value="ALT_SEQ"/>
    <property type="molecule type" value="Genomic_DNA"/>
</dbReference>
<dbReference type="EMBL" id="CP002685">
    <property type="protein sequence ID" value="AEC08849.1"/>
    <property type="molecule type" value="Genomic_DNA"/>
</dbReference>
<dbReference type="EMBL" id="AY074317">
    <property type="protein sequence ID" value="AAL67013.1"/>
    <property type="molecule type" value="mRNA"/>
</dbReference>
<dbReference type="PIR" id="F84746">
    <property type="entry name" value="F84746"/>
</dbReference>
<dbReference type="RefSeq" id="NP_850212.1">
    <property type="nucleotide sequence ID" value="NM_179881.4"/>
</dbReference>
<dbReference type="SMR" id="Q8VY01"/>
<dbReference type="FunCoup" id="Q8VY01">
    <property type="interactions" value="7"/>
</dbReference>
<dbReference type="STRING" id="3702.Q8VY01"/>
<dbReference type="ESTHER" id="arath-SCP46">
    <property type="family name" value="Carboxypeptidase_S10"/>
</dbReference>
<dbReference type="MEROPS" id="S10.A42"/>
<dbReference type="GlyCosmos" id="Q8VY01">
    <property type="glycosylation" value="3 sites, No reported glycans"/>
</dbReference>
<dbReference type="GlyGen" id="Q8VY01">
    <property type="glycosylation" value="3 sites"/>
</dbReference>
<dbReference type="PaxDb" id="3702-AT2G33530.1"/>
<dbReference type="ProteomicsDB" id="232713"/>
<dbReference type="EnsemblPlants" id="AT2G33530.1">
    <property type="protein sequence ID" value="AT2G33530.1"/>
    <property type="gene ID" value="AT2G33530"/>
</dbReference>
<dbReference type="GeneID" id="817918"/>
<dbReference type="Gramene" id="AT2G33530.1">
    <property type="protein sequence ID" value="AT2G33530.1"/>
    <property type="gene ID" value="AT2G33530"/>
</dbReference>
<dbReference type="KEGG" id="ath:AT2G33530"/>
<dbReference type="Araport" id="AT2G33530"/>
<dbReference type="TAIR" id="AT2G33530">
    <property type="gene designation" value="SCPL46"/>
</dbReference>
<dbReference type="eggNOG" id="KOG1282">
    <property type="taxonomic scope" value="Eukaryota"/>
</dbReference>
<dbReference type="HOGENOM" id="CLU_008523_13_1_1"/>
<dbReference type="InParanoid" id="Q8VY01"/>
<dbReference type="OMA" id="QCFTISF"/>
<dbReference type="PhylomeDB" id="Q8VY01"/>
<dbReference type="PRO" id="PR:Q8VY01"/>
<dbReference type="Proteomes" id="UP000006548">
    <property type="component" value="Chromosome 2"/>
</dbReference>
<dbReference type="ExpressionAtlas" id="Q8VY01">
    <property type="expression patterns" value="baseline and differential"/>
</dbReference>
<dbReference type="GO" id="GO:0005783">
    <property type="term" value="C:endoplasmic reticulum"/>
    <property type="evidence" value="ECO:0007005"/>
    <property type="project" value="TAIR"/>
</dbReference>
<dbReference type="GO" id="GO:0005576">
    <property type="term" value="C:extracellular region"/>
    <property type="evidence" value="ECO:0007669"/>
    <property type="project" value="UniProtKB-SubCell"/>
</dbReference>
<dbReference type="GO" id="GO:0009505">
    <property type="term" value="C:plant-type cell wall"/>
    <property type="evidence" value="ECO:0007005"/>
    <property type="project" value="TAIR"/>
</dbReference>
<dbReference type="GO" id="GO:0009506">
    <property type="term" value="C:plasmodesma"/>
    <property type="evidence" value="ECO:0007005"/>
    <property type="project" value="TAIR"/>
</dbReference>
<dbReference type="GO" id="GO:0004185">
    <property type="term" value="F:serine-type carboxypeptidase activity"/>
    <property type="evidence" value="ECO:0007669"/>
    <property type="project" value="InterPro"/>
</dbReference>
<dbReference type="GO" id="GO:0006508">
    <property type="term" value="P:proteolysis"/>
    <property type="evidence" value="ECO:0007669"/>
    <property type="project" value="UniProtKB-KW"/>
</dbReference>
<dbReference type="FunFam" id="3.40.50.11320:FF:000004">
    <property type="entry name" value="Carboxypeptidase"/>
    <property type="match status" value="1"/>
</dbReference>
<dbReference type="FunFam" id="3.40.50.1820:FF:000453">
    <property type="entry name" value="Carboxypeptidase"/>
    <property type="match status" value="1"/>
</dbReference>
<dbReference type="Gene3D" id="3.40.50.11320">
    <property type="match status" value="1"/>
</dbReference>
<dbReference type="Gene3D" id="6.10.250.940">
    <property type="match status" value="1"/>
</dbReference>
<dbReference type="Gene3D" id="3.40.50.1820">
    <property type="entry name" value="alpha/beta hydrolase"/>
    <property type="match status" value="1"/>
</dbReference>
<dbReference type="InterPro" id="IPR029058">
    <property type="entry name" value="AB_hydrolase_fold"/>
</dbReference>
<dbReference type="InterPro" id="IPR001563">
    <property type="entry name" value="Peptidase_S10"/>
</dbReference>
<dbReference type="InterPro" id="IPR018202">
    <property type="entry name" value="Ser_caboxypep_ser_AS"/>
</dbReference>
<dbReference type="PANTHER" id="PTHR11802:SF435">
    <property type="entry name" value="SERINE CARBOXYPEPTIDASE-LIKE 46"/>
    <property type="match status" value="1"/>
</dbReference>
<dbReference type="PANTHER" id="PTHR11802">
    <property type="entry name" value="SERINE PROTEASE FAMILY S10 SERINE CARBOXYPEPTIDASE"/>
    <property type="match status" value="1"/>
</dbReference>
<dbReference type="Pfam" id="PF00450">
    <property type="entry name" value="Peptidase_S10"/>
    <property type="match status" value="1"/>
</dbReference>
<dbReference type="PRINTS" id="PR00724">
    <property type="entry name" value="CRBOXYPTASEC"/>
</dbReference>
<dbReference type="SUPFAM" id="SSF53474">
    <property type="entry name" value="alpha/beta-Hydrolases"/>
    <property type="match status" value="1"/>
</dbReference>
<dbReference type="PROSITE" id="PS00131">
    <property type="entry name" value="CARBOXYPEPT_SER_SER"/>
    <property type="match status" value="1"/>
</dbReference>
<feature type="signal peptide" evidence="2">
    <location>
        <begin position="1"/>
        <end position="25"/>
    </location>
</feature>
<feature type="chain" id="PRO_0000274661" description="Serine carboxypeptidase-like 46">
    <location>
        <begin position="26"/>
        <end position="465"/>
    </location>
</feature>
<feature type="active site" evidence="3">
    <location>
        <position position="179"/>
    </location>
</feature>
<feature type="active site" evidence="3">
    <location>
        <position position="381"/>
    </location>
</feature>
<feature type="active site" evidence="3">
    <location>
        <position position="438"/>
    </location>
</feature>
<feature type="glycosylation site" description="N-linked (GlcNAc...) asparagine" evidence="2">
    <location>
        <position position="137"/>
    </location>
</feature>
<feature type="glycosylation site" description="N-linked (GlcNAc...) asparagine" evidence="2">
    <location>
        <position position="170"/>
    </location>
</feature>
<feature type="glycosylation site" description="N-linked (GlcNAc...) asparagine" evidence="2">
    <location>
        <position position="246"/>
    </location>
</feature>
<feature type="disulfide bond" evidence="1">
    <location>
        <begin position="88"/>
        <end position="344"/>
    </location>
</feature>
<feature type="disulfide bond" evidence="1">
    <location>
        <begin position="245"/>
        <end position="263"/>
    </location>
</feature>
<feature type="disulfide bond" evidence="1">
    <location>
        <begin position="288"/>
        <end position="313"/>
    </location>
</feature>
<name>SCP46_ARATH</name>